<evidence type="ECO:0000255" key="1">
    <source>
        <dbReference type="HAMAP-Rule" id="MF_00142"/>
    </source>
</evidence>
<organism>
    <name type="scientific">Ectopseudomonas mendocina (strain ymp)</name>
    <name type="common">Pseudomonas mendocina</name>
    <dbReference type="NCBI Taxonomy" id="399739"/>
    <lineage>
        <taxon>Bacteria</taxon>
        <taxon>Pseudomonadati</taxon>
        <taxon>Pseudomonadota</taxon>
        <taxon>Gammaproteobacteria</taxon>
        <taxon>Pseudomonadales</taxon>
        <taxon>Pseudomonadaceae</taxon>
        <taxon>Ectopseudomonas</taxon>
    </lineage>
</organism>
<protein>
    <recommendedName>
        <fullName evidence="1">Iron-sulfur cluster assembly protein CyaY</fullName>
    </recommendedName>
</protein>
<proteinExistence type="inferred from homology"/>
<comment type="function">
    <text evidence="1">Involved in iron-sulfur (Fe-S) cluster assembly. May act as a regulator of Fe-S biogenesis.</text>
</comment>
<comment type="similarity">
    <text evidence="1">Belongs to the frataxin family.</text>
</comment>
<sequence length="110" mass="12432">MSLSEARFHDLVDATQQAVEDIFDDSGLDVDLENSAGVLTVRFDNGSQLIFSRQEPIRQLWLAARSGGYHFDYDEAEGRWICDSSDEQLGEMLVRITLEQSGAELEFDEL</sequence>
<name>CYAY_ECTM1</name>
<feature type="chain" id="PRO_1000010941" description="Iron-sulfur cluster assembly protein CyaY">
    <location>
        <begin position="1"/>
        <end position="110"/>
    </location>
</feature>
<keyword id="KW-0408">Iron</keyword>
<keyword id="KW-0479">Metal-binding</keyword>
<accession>A4XNX7</accession>
<gene>
    <name evidence="1" type="primary">cyaY</name>
    <name type="ordered locus">Pmen_0269</name>
</gene>
<dbReference type="EMBL" id="CP000680">
    <property type="protein sequence ID" value="ABP83043.1"/>
    <property type="molecule type" value="Genomic_DNA"/>
</dbReference>
<dbReference type="SMR" id="A4XNX7"/>
<dbReference type="STRING" id="399739.Pmen_0269"/>
<dbReference type="KEGG" id="pmy:Pmen_0269"/>
<dbReference type="PATRIC" id="fig|399739.8.peg.276"/>
<dbReference type="eggNOG" id="COG1965">
    <property type="taxonomic scope" value="Bacteria"/>
</dbReference>
<dbReference type="HOGENOM" id="CLU_080880_3_0_6"/>
<dbReference type="OrthoDB" id="285675at2"/>
<dbReference type="GO" id="GO:0005829">
    <property type="term" value="C:cytosol"/>
    <property type="evidence" value="ECO:0007669"/>
    <property type="project" value="TreeGrafter"/>
</dbReference>
<dbReference type="GO" id="GO:0008199">
    <property type="term" value="F:ferric iron binding"/>
    <property type="evidence" value="ECO:0007669"/>
    <property type="project" value="InterPro"/>
</dbReference>
<dbReference type="GO" id="GO:0008198">
    <property type="term" value="F:ferrous iron binding"/>
    <property type="evidence" value="ECO:0007669"/>
    <property type="project" value="TreeGrafter"/>
</dbReference>
<dbReference type="GO" id="GO:0016226">
    <property type="term" value="P:iron-sulfur cluster assembly"/>
    <property type="evidence" value="ECO:0007669"/>
    <property type="project" value="UniProtKB-UniRule"/>
</dbReference>
<dbReference type="Gene3D" id="3.30.920.10">
    <property type="entry name" value="Frataxin/CyaY"/>
    <property type="match status" value="1"/>
</dbReference>
<dbReference type="HAMAP" id="MF_00142">
    <property type="entry name" value="CyaY"/>
    <property type="match status" value="1"/>
</dbReference>
<dbReference type="InterPro" id="IPR047584">
    <property type="entry name" value="CyaY"/>
</dbReference>
<dbReference type="InterPro" id="IPR002908">
    <property type="entry name" value="Frataxin/CyaY"/>
</dbReference>
<dbReference type="InterPro" id="IPR036524">
    <property type="entry name" value="Frataxin/CyaY_sf"/>
</dbReference>
<dbReference type="InterPro" id="IPR020895">
    <property type="entry name" value="Frataxin_CS"/>
</dbReference>
<dbReference type="NCBIfam" id="TIGR03421">
    <property type="entry name" value="FeS_CyaY"/>
    <property type="match status" value="1"/>
</dbReference>
<dbReference type="PANTHER" id="PTHR16821">
    <property type="entry name" value="FRATAXIN"/>
    <property type="match status" value="1"/>
</dbReference>
<dbReference type="PANTHER" id="PTHR16821:SF2">
    <property type="entry name" value="FRATAXIN, MITOCHONDRIAL"/>
    <property type="match status" value="1"/>
</dbReference>
<dbReference type="Pfam" id="PF01491">
    <property type="entry name" value="Frataxin_Cyay"/>
    <property type="match status" value="1"/>
</dbReference>
<dbReference type="SMART" id="SM01219">
    <property type="entry name" value="Frataxin_Cyay"/>
    <property type="match status" value="1"/>
</dbReference>
<dbReference type="SUPFAM" id="SSF55387">
    <property type="entry name" value="Frataxin/Nqo15-like"/>
    <property type="match status" value="1"/>
</dbReference>
<dbReference type="PROSITE" id="PS01344">
    <property type="entry name" value="FRATAXIN_1"/>
    <property type="match status" value="1"/>
</dbReference>
<dbReference type="PROSITE" id="PS50810">
    <property type="entry name" value="FRATAXIN_2"/>
    <property type="match status" value="1"/>
</dbReference>
<reference key="1">
    <citation type="submission" date="2007-04" db="EMBL/GenBank/DDBJ databases">
        <title>Complete sequence of Pseudomonas mendocina ymp.</title>
        <authorList>
            <consortium name="US DOE Joint Genome Institute"/>
            <person name="Copeland A."/>
            <person name="Lucas S."/>
            <person name="Lapidus A."/>
            <person name="Barry K."/>
            <person name="Glavina del Rio T."/>
            <person name="Dalin E."/>
            <person name="Tice H."/>
            <person name="Pitluck S."/>
            <person name="Kiss H."/>
            <person name="Brettin T."/>
            <person name="Detter J.C."/>
            <person name="Bruce D."/>
            <person name="Han C."/>
            <person name="Schmutz J."/>
            <person name="Larimer F."/>
            <person name="Land M."/>
            <person name="Hauser L."/>
            <person name="Kyrpides N."/>
            <person name="Mikhailova N."/>
            <person name="Hersman L."/>
            <person name="Dubois J."/>
            <person name="Maurice P."/>
            <person name="Richardson P."/>
        </authorList>
    </citation>
    <scope>NUCLEOTIDE SEQUENCE [LARGE SCALE GENOMIC DNA]</scope>
    <source>
        <strain>ymp</strain>
    </source>
</reference>